<name>HSLO_THEYD</name>
<evidence type="ECO:0000255" key="1">
    <source>
        <dbReference type="HAMAP-Rule" id="MF_00117"/>
    </source>
</evidence>
<reference key="1">
    <citation type="submission" date="2008-08" db="EMBL/GenBank/DDBJ databases">
        <title>The complete genome sequence of Thermodesulfovibrio yellowstonii strain ATCC 51303 / DSM 11347 / YP87.</title>
        <authorList>
            <person name="Dodson R.J."/>
            <person name="Durkin A.S."/>
            <person name="Wu M."/>
            <person name="Eisen J."/>
            <person name="Sutton G."/>
        </authorList>
    </citation>
    <scope>NUCLEOTIDE SEQUENCE [LARGE SCALE GENOMIC DNA]</scope>
    <source>
        <strain>ATCC 51303 / DSM 11347 / YP87</strain>
    </source>
</reference>
<keyword id="KW-0143">Chaperone</keyword>
<keyword id="KW-0963">Cytoplasm</keyword>
<keyword id="KW-1015">Disulfide bond</keyword>
<keyword id="KW-0676">Redox-active center</keyword>
<keyword id="KW-1185">Reference proteome</keyword>
<keyword id="KW-0862">Zinc</keyword>
<proteinExistence type="inferred from homology"/>
<feature type="chain" id="PRO_1000095040" description="33 kDa chaperonin">
    <location>
        <begin position="1"/>
        <end position="287"/>
    </location>
</feature>
<feature type="disulfide bond" description="Redox-active" evidence="1">
    <location>
        <begin position="233"/>
        <end position="235"/>
    </location>
</feature>
<feature type="disulfide bond" description="Redox-active" evidence="1">
    <location>
        <begin position="266"/>
        <end position="269"/>
    </location>
</feature>
<protein>
    <recommendedName>
        <fullName evidence="1">33 kDa chaperonin</fullName>
    </recommendedName>
    <alternativeName>
        <fullName evidence="1">Heat shock protein 33 homolog</fullName>
        <shortName evidence="1">HSP33</shortName>
    </alternativeName>
</protein>
<dbReference type="EMBL" id="CP001147">
    <property type="protein sequence ID" value="ACI22197.1"/>
    <property type="molecule type" value="Genomic_DNA"/>
</dbReference>
<dbReference type="RefSeq" id="WP_012546884.1">
    <property type="nucleotide sequence ID" value="NC_011296.1"/>
</dbReference>
<dbReference type="RefSeq" id="YP_002248388.1">
    <property type="nucleotide sequence ID" value="NC_011296.1"/>
</dbReference>
<dbReference type="SMR" id="B5YJH3"/>
<dbReference type="FunCoup" id="B5YJH3">
    <property type="interactions" value="227"/>
</dbReference>
<dbReference type="STRING" id="289376.THEYE_A0545"/>
<dbReference type="EnsemblBacteria" id="ACI22197">
    <property type="protein sequence ID" value="ACI22197"/>
    <property type="gene ID" value="THEYE_A0545"/>
</dbReference>
<dbReference type="KEGG" id="tye:THEYE_A0545"/>
<dbReference type="PATRIC" id="fig|289376.4.peg.539"/>
<dbReference type="eggNOG" id="COG1281">
    <property type="taxonomic scope" value="Bacteria"/>
</dbReference>
<dbReference type="HOGENOM" id="CLU_054493_1_0_0"/>
<dbReference type="InParanoid" id="B5YJH3"/>
<dbReference type="OrthoDB" id="9776534at2"/>
<dbReference type="Proteomes" id="UP000000718">
    <property type="component" value="Chromosome"/>
</dbReference>
<dbReference type="GO" id="GO:0005737">
    <property type="term" value="C:cytoplasm"/>
    <property type="evidence" value="ECO:0000318"/>
    <property type="project" value="GO_Central"/>
</dbReference>
<dbReference type="GO" id="GO:0044183">
    <property type="term" value="F:protein folding chaperone"/>
    <property type="evidence" value="ECO:0000318"/>
    <property type="project" value="GO_Central"/>
</dbReference>
<dbReference type="GO" id="GO:0051082">
    <property type="term" value="F:unfolded protein binding"/>
    <property type="evidence" value="ECO:0007669"/>
    <property type="project" value="UniProtKB-UniRule"/>
</dbReference>
<dbReference type="GO" id="GO:0042026">
    <property type="term" value="P:protein refolding"/>
    <property type="evidence" value="ECO:0000318"/>
    <property type="project" value="GO_Central"/>
</dbReference>
<dbReference type="CDD" id="cd00498">
    <property type="entry name" value="Hsp33"/>
    <property type="match status" value="1"/>
</dbReference>
<dbReference type="Gene3D" id="3.55.30.10">
    <property type="entry name" value="Hsp33 domain"/>
    <property type="match status" value="1"/>
</dbReference>
<dbReference type="Gene3D" id="3.90.1280.10">
    <property type="entry name" value="HSP33 redox switch-like"/>
    <property type="match status" value="1"/>
</dbReference>
<dbReference type="HAMAP" id="MF_00117">
    <property type="entry name" value="HslO"/>
    <property type="match status" value="1"/>
</dbReference>
<dbReference type="InterPro" id="IPR000397">
    <property type="entry name" value="Heat_shock_Hsp33"/>
</dbReference>
<dbReference type="InterPro" id="IPR016154">
    <property type="entry name" value="Heat_shock_Hsp33_C"/>
</dbReference>
<dbReference type="InterPro" id="IPR016153">
    <property type="entry name" value="Heat_shock_Hsp33_N"/>
</dbReference>
<dbReference type="NCBIfam" id="NF001033">
    <property type="entry name" value="PRK00114.1"/>
    <property type="match status" value="1"/>
</dbReference>
<dbReference type="PANTHER" id="PTHR30111">
    <property type="entry name" value="33 KDA CHAPERONIN"/>
    <property type="match status" value="1"/>
</dbReference>
<dbReference type="PANTHER" id="PTHR30111:SF1">
    <property type="entry name" value="33 KDA CHAPERONIN"/>
    <property type="match status" value="1"/>
</dbReference>
<dbReference type="Pfam" id="PF01430">
    <property type="entry name" value="HSP33"/>
    <property type="match status" value="1"/>
</dbReference>
<dbReference type="PIRSF" id="PIRSF005261">
    <property type="entry name" value="Heat_shock_Hsp33"/>
    <property type="match status" value="1"/>
</dbReference>
<dbReference type="SUPFAM" id="SSF64397">
    <property type="entry name" value="Hsp33 domain"/>
    <property type="match status" value="1"/>
</dbReference>
<dbReference type="SUPFAM" id="SSF118352">
    <property type="entry name" value="HSP33 redox switch-like"/>
    <property type="match status" value="1"/>
</dbReference>
<accession>B5YJH3</accession>
<organism>
    <name type="scientific">Thermodesulfovibrio yellowstonii (strain ATCC 51303 / DSM 11347 / YP87)</name>
    <dbReference type="NCBI Taxonomy" id="289376"/>
    <lineage>
        <taxon>Bacteria</taxon>
        <taxon>Pseudomonadati</taxon>
        <taxon>Nitrospirota</taxon>
        <taxon>Thermodesulfovibrionia</taxon>
        <taxon>Thermodesulfovibrionales</taxon>
        <taxon>Thermodesulfovibrionaceae</taxon>
        <taxon>Thermodesulfovibrio</taxon>
    </lineage>
</organism>
<sequence length="287" mass="32215">MDEVVKGLIKNEHVLVVATICTETVEYARKIHDTWPTATAAMGRVIAGSVLLASTLKDRQKIMVQIKGDGPLNEVVAEADSFYRVRAYVKRPHIYMGLKNEKIDVGRGVGKGFLNVIRDLGLREYYQSSVELQTGEIARDLAYYLNVSEQIPSAVSLGVYVEPDNSVKAAGGFMIQTMPETRTEIVEFLERKLSETQSTSSMILQGMDSLQILEEVVGLPIEVLHRGTVTYFCPCTKDRVINAIVTLGREEIQKMIEEGKTVDVECYFCKKKYEVTVEELKILLREI</sequence>
<comment type="function">
    <text evidence="1">Redox regulated molecular chaperone. Protects both thermally unfolding and oxidatively damaged proteins from irreversible aggregation. Plays an important role in the bacterial defense system toward oxidative stress.</text>
</comment>
<comment type="subcellular location">
    <subcellularLocation>
        <location evidence="1">Cytoplasm</location>
    </subcellularLocation>
</comment>
<comment type="PTM">
    <text evidence="1">Under oxidizing conditions two disulfide bonds are formed involving the reactive cysteines. Under reducing conditions zinc is bound to the reactive cysteines and the protein is inactive.</text>
</comment>
<comment type="similarity">
    <text evidence="1">Belongs to the HSP33 family.</text>
</comment>
<gene>
    <name evidence="1" type="primary">hslO</name>
    <name type="ordered locus">THEYE_A0545</name>
</gene>